<evidence type="ECO:0000255" key="1">
    <source>
        <dbReference type="HAMAP-Rule" id="MF_00161"/>
    </source>
</evidence>
<reference key="1">
    <citation type="submission" date="2008-10" db="EMBL/GenBank/DDBJ databases">
        <title>The complete genome sequence of Helicobacter pylori strain P12.</title>
        <authorList>
            <person name="Fischer W."/>
            <person name="Windhager L."/>
            <person name="Karnholz A."/>
            <person name="Zeiller M."/>
            <person name="Zimmer R."/>
            <person name="Haas R."/>
        </authorList>
    </citation>
    <scope>NUCLEOTIDE SEQUENCE [LARGE SCALE GENOMIC DNA]</scope>
    <source>
        <strain>P12</strain>
    </source>
</reference>
<feature type="chain" id="PRO_1000097258" description="Lipoprotein signal peptidase">
    <location>
        <begin position="1"/>
        <end position="157"/>
    </location>
</feature>
<feature type="transmembrane region" description="Helical" evidence="1">
    <location>
        <begin position="10"/>
        <end position="30"/>
    </location>
</feature>
<feature type="transmembrane region" description="Helical" evidence="1">
    <location>
        <begin position="36"/>
        <end position="56"/>
    </location>
</feature>
<feature type="transmembrane region" description="Helical" evidence="1">
    <location>
        <begin position="58"/>
        <end position="78"/>
    </location>
</feature>
<feature type="transmembrane region" description="Helical" evidence="1">
    <location>
        <begin position="84"/>
        <end position="104"/>
    </location>
</feature>
<feature type="transmembrane region" description="Helical" evidence="1">
    <location>
        <begin position="122"/>
        <end position="142"/>
    </location>
</feature>
<feature type="active site" evidence="1">
    <location>
        <position position="114"/>
    </location>
</feature>
<feature type="active site" evidence="1">
    <location>
        <position position="131"/>
    </location>
</feature>
<accession>B6JPH7</accession>
<organism>
    <name type="scientific">Helicobacter pylori (strain P12)</name>
    <dbReference type="NCBI Taxonomy" id="570508"/>
    <lineage>
        <taxon>Bacteria</taxon>
        <taxon>Pseudomonadati</taxon>
        <taxon>Campylobacterota</taxon>
        <taxon>Epsilonproteobacteria</taxon>
        <taxon>Campylobacterales</taxon>
        <taxon>Helicobacteraceae</taxon>
        <taxon>Helicobacter</taxon>
    </lineage>
</organism>
<keyword id="KW-0064">Aspartyl protease</keyword>
<keyword id="KW-0997">Cell inner membrane</keyword>
<keyword id="KW-1003">Cell membrane</keyword>
<keyword id="KW-0378">Hydrolase</keyword>
<keyword id="KW-0472">Membrane</keyword>
<keyword id="KW-0645">Protease</keyword>
<keyword id="KW-0812">Transmembrane</keyword>
<keyword id="KW-1133">Transmembrane helix</keyword>
<gene>
    <name evidence="1" type="primary">lspA</name>
    <name type="ordered locus">HPP12_0078</name>
</gene>
<name>LSPA_HELP2</name>
<proteinExistence type="inferred from homology"/>
<comment type="function">
    <text evidence="1">This protein specifically catalyzes the removal of signal peptides from prolipoproteins.</text>
</comment>
<comment type="catalytic activity">
    <reaction evidence="1">
        <text>Release of signal peptides from bacterial membrane prolipoproteins. Hydrolyzes -Xaa-Yaa-Zaa-|-(S,diacylglyceryl)Cys-, in which Xaa is hydrophobic (preferably Leu), and Yaa (Ala or Ser) and Zaa (Gly or Ala) have small, neutral side chains.</text>
        <dbReference type="EC" id="3.4.23.36"/>
    </reaction>
</comment>
<comment type="pathway">
    <text evidence="1">Protein modification; lipoprotein biosynthesis (signal peptide cleavage).</text>
</comment>
<comment type="subcellular location">
    <subcellularLocation>
        <location evidence="1">Cell inner membrane</location>
        <topology evidence="1">Multi-pass membrane protein</topology>
    </subcellularLocation>
</comment>
<comment type="similarity">
    <text evidence="1">Belongs to the peptidase A8 family.</text>
</comment>
<dbReference type="EC" id="3.4.23.36" evidence="1"/>
<dbReference type="EMBL" id="CP001217">
    <property type="protein sequence ID" value="ACJ07238.1"/>
    <property type="molecule type" value="Genomic_DNA"/>
</dbReference>
<dbReference type="SMR" id="B6JPH7"/>
<dbReference type="KEGG" id="hpp:HPP12_0078"/>
<dbReference type="HOGENOM" id="CLU_083252_4_3_7"/>
<dbReference type="UniPathway" id="UPA00665"/>
<dbReference type="Proteomes" id="UP000008198">
    <property type="component" value="Chromosome"/>
</dbReference>
<dbReference type="GO" id="GO:0005886">
    <property type="term" value="C:plasma membrane"/>
    <property type="evidence" value="ECO:0007669"/>
    <property type="project" value="UniProtKB-SubCell"/>
</dbReference>
<dbReference type="GO" id="GO:0004190">
    <property type="term" value="F:aspartic-type endopeptidase activity"/>
    <property type="evidence" value="ECO:0007669"/>
    <property type="project" value="UniProtKB-UniRule"/>
</dbReference>
<dbReference type="GO" id="GO:0006508">
    <property type="term" value="P:proteolysis"/>
    <property type="evidence" value="ECO:0007669"/>
    <property type="project" value="UniProtKB-KW"/>
</dbReference>
<dbReference type="HAMAP" id="MF_00161">
    <property type="entry name" value="LspA"/>
    <property type="match status" value="1"/>
</dbReference>
<dbReference type="InterPro" id="IPR001872">
    <property type="entry name" value="Peptidase_A8"/>
</dbReference>
<dbReference type="NCBIfam" id="TIGR00077">
    <property type="entry name" value="lspA"/>
    <property type="match status" value="1"/>
</dbReference>
<dbReference type="PANTHER" id="PTHR33695">
    <property type="entry name" value="LIPOPROTEIN SIGNAL PEPTIDASE"/>
    <property type="match status" value="1"/>
</dbReference>
<dbReference type="PANTHER" id="PTHR33695:SF1">
    <property type="entry name" value="LIPOPROTEIN SIGNAL PEPTIDASE"/>
    <property type="match status" value="1"/>
</dbReference>
<dbReference type="Pfam" id="PF01252">
    <property type="entry name" value="Peptidase_A8"/>
    <property type="match status" value="1"/>
</dbReference>
<dbReference type="PRINTS" id="PR00781">
    <property type="entry name" value="LIPOSIGPTASE"/>
</dbReference>
<dbReference type="PROSITE" id="PS00855">
    <property type="entry name" value="SPASE_II"/>
    <property type="match status" value="1"/>
</dbReference>
<sequence>MLNTTQQSLLVFIGVFFLIFGVDQAIKHAILEGFRYESLMIDIVLVFNKGVAFSLLSFLEGGLKYLQILLILGLFIFLMRQKELFKNHAIEFGMVFGAGVSNVLDRFVHGGVVDYVYYHYGFDFAIFNFADVMIDVGVGVLLLRQFFFKQKQNKIKA</sequence>
<protein>
    <recommendedName>
        <fullName evidence="1">Lipoprotein signal peptidase</fullName>
        <ecNumber evidence="1">3.4.23.36</ecNumber>
    </recommendedName>
    <alternativeName>
        <fullName evidence="1">Prolipoprotein signal peptidase</fullName>
    </alternativeName>
    <alternativeName>
        <fullName evidence="1">Signal peptidase II</fullName>
        <shortName evidence="1">SPase II</shortName>
    </alternativeName>
</protein>